<keyword id="KW-0963">Cytoplasm</keyword>
<keyword id="KW-0369">Histidine metabolism</keyword>
<keyword id="KW-0378">Hydrolase</keyword>
<keyword id="KW-0408">Iron</keyword>
<keyword id="KW-0479">Metal-binding</keyword>
<keyword id="KW-0862">Zinc</keyword>
<accession>A7GQZ8</accession>
<name>HUTI_BACCN</name>
<sequence length="423" mass="46102">MLDILLTNIGQLLTMDQEDGVLRQEAMKTLPVIESGAVGIKDGVIMFVGTAEEAKGLQAREIIDCEGKVVSPGLVDPHTHLVFGGSRENEIALKLQGVPYLEILEQGGGILSTVNATKKASKEELVKKANFHLDRMLSFGVTTVEAKSGYGLDDETEWKQLEVVAQLQKEHPIDLVSTFLGAHAVPKEYKGKSKEFLQWMLDLLPAIKEKELAEFVDIFCETGVFSVEESKEFLLEAKELGFDVKIHADEIDPLGGAEAAAEIGAASADHLVGASDKGIEMLANSNTVATLLPGTTFYLNKESFARGRKMIDEGVAVALATDFNPGSCPTENIQLVMSIAMLKLKMTPEEVWNAVTVNSAYAINRGDVAGKIRVGRKADLVLWDAHHYAYVPYHYGVSHVNTVWKNGNLAYTRGDKAWSKATI</sequence>
<proteinExistence type="inferred from homology"/>
<feature type="chain" id="PRO_1000079819" description="Imidazolonepropionase">
    <location>
        <begin position="1"/>
        <end position="423"/>
    </location>
</feature>
<feature type="binding site" evidence="1">
    <location>
        <position position="78"/>
    </location>
    <ligand>
        <name>Fe(3+)</name>
        <dbReference type="ChEBI" id="CHEBI:29034"/>
    </ligand>
</feature>
<feature type="binding site" evidence="1">
    <location>
        <position position="78"/>
    </location>
    <ligand>
        <name>Zn(2+)</name>
        <dbReference type="ChEBI" id="CHEBI:29105"/>
    </ligand>
</feature>
<feature type="binding site" evidence="1">
    <location>
        <position position="80"/>
    </location>
    <ligand>
        <name>Fe(3+)</name>
        <dbReference type="ChEBI" id="CHEBI:29034"/>
    </ligand>
</feature>
<feature type="binding site" evidence="1">
    <location>
        <position position="80"/>
    </location>
    <ligand>
        <name>Zn(2+)</name>
        <dbReference type="ChEBI" id="CHEBI:29105"/>
    </ligand>
</feature>
<feature type="binding site" evidence="1">
    <location>
        <position position="87"/>
    </location>
    <ligand>
        <name>4-imidazolone-5-propanoate</name>
        <dbReference type="ChEBI" id="CHEBI:77893"/>
    </ligand>
</feature>
<feature type="binding site" evidence="1">
    <location>
        <position position="150"/>
    </location>
    <ligand>
        <name>4-imidazolone-5-propanoate</name>
        <dbReference type="ChEBI" id="CHEBI:77893"/>
    </ligand>
</feature>
<feature type="binding site" evidence="1">
    <location>
        <position position="150"/>
    </location>
    <ligand>
        <name>N-formimidoyl-L-glutamate</name>
        <dbReference type="ChEBI" id="CHEBI:58928"/>
    </ligand>
</feature>
<feature type="binding site" evidence="1">
    <location>
        <position position="183"/>
    </location>
    <ligand>
        <name>4-imidazolone-5-propanoate</name>
        <dbReference type="ChEBI" id="CHEBI:77893"/>
    </ligand>
</feature>
<feature type="binding site" evidence="1">
    <location>
        <position position="247"/>
    </location>
    <ligand>
        <name>Fe(3+)</name>
        <dbReference type="ChEBI" id="CHEBI:29034"/>
    </ligand>
</feature>
<feature type="binding site" evidence="1">
    <location>
        <position position="247"/>
    </location>
    <ligand>
        <name>Zn(2+)</name>
        <dbReference type="ChEBI" id="CHEBI:29105"/>
    </ligand>
</feature>
<feature type="binding site" evidence="1">
    <location>
        <position position="250"/>
    </location>
    <ligand>
        <name>4-imidazolone-5-propanoate</name>
        <dbReference type="ChEBI" id="CHEBI:77893"/>
    </ligand>
</feature>
<feature type="binding site" evidence="1">
    <location>
        <position position="322"/>
    </location>
    <ligand>
        <name>Fe(3+)</name>
        <dbReference type="ChEBI" id="CHEBI:29034"/>
    </ligand>
</feature>
<feature type="binding site" evidence="1">
    <location>
        <position position="322"/>
    </location>
    <ligand>
        <name>Zn(2+)</name>
        <dbReference type="ChEBI" id="CHEBI:29105"/>
    </ligand>
</feature>
<feature type="binding site" evidence="1">
    <location>
        <position position="324"/>
    </location>
    <ligand>
        <name>N-formimidoyl-L-glutamate</name>
        <dbReference type="ChEBI" id="CHEBI:58928"/>
    </ligand>
</feature>
<feature type="binding site" evidence="1">
    <location>
        <position position="326"/>
    </location>
    <ligand>
        <name>N-formimidoyl-L-glutamate</name>
        <dbReference type="ChEBI" id="CHEBI:58928"/>
    </ligand>
</feature>
<feature type="binding site" evidence="1">
    <location>
        <position position="327"/>
    </location>
    <ligand>
        <name>4-imidazolone-5-propanoate</name>
        <dbReference type="ChEBI" id="CHEBI:77893"/>
    </ligand>
</feature>
<gene>
    <name evidence="1" type="primary">hutI</name>
    <name type="ordered locus">Bcer98_2310</name>
</gene>
<evidence type="ECO:0000255" key="1">
    <source>
        <dbReference type="HAMAP-Rule" id="MF_00372"/>
    </source>
</evidence>
<reference key="1">
    <citation type="journal article" date="2008" name="Chem. Biol. Interact.">
        <title>Extending the Bacillus cereus group genomics to putative food-borne pathogens of different toxicity.</title>
        <authorList>
            <person name="Lapidus A."/>
            <person name="Goltsman E."/>
            <person name="Auger S."/>
            <person name="Galleron N."/>
            <person name="Segurens B."/>
            <person name="Dossat C."/>
            <person name="Land M.L."/>
            <person name="Broussolle V."/>
            <person name="Brillard J."/>
            <person name="Guinebretiere M.-H."/>
            <person name="Sanchis V."/>
            <person name="Nguen-the C."/>
            <person name="Lereclus D."/>
            <person name="Richardson P."/>
            <person name="Wincker P."/>
            <person name="Weissenbach J."/>
            <person name="Ehrlich S.D."/>
            <person name="Sorokin A."/>
        </authorList>
    </citation>
    <scope>NUCLEOTIDE SEQUENCE [LARGE SCALE GENOMIC DNA]</scope>
    <source>
        <strain>DSM 22905 / CIP 110041 / 391-98 / NVH 391-98</strain>
    </source>
</reference>
<organism>
    <name type="scientific">Bacillus cytotoxicus (strain DSM 22905 / CIP 110041 / 391-98 / NVH 391-98)</name>
    <dbReference type="NCBI Taxonomy" id="315749"/>
    <lineage>
        <taxon>Bacteria</taxon>
        <taxon>Bacillati</taxon>
        <taxon>Bacillota</taxon>
        <taxon>Bacilli</taxon>
        <taxon>Bacillales</taxon>
        <taxon>Bacillaceae</taxon>
        <taxon>Bacillus</taxon>
        <taxon>Bacillus cereus group</taxon>
    </lineage>
</organism>
<comment type="function">
    <text evidence="1">Catalyzes the hydrolytic cleavage of the carbon-nitrogen bond in imidazolone-5-propanoate to yield N-formimidoyl-L-glutamate. It is the third step in the universal histidine degradation pathway.</text>
</comment>
<comment type="catalytic activity">
    <reaction evidence="1">
        <text>4-imidazolone-5-propanoate + H2O = N-formimidoyl-L-glutamate</text>
        <dbReference type="Rhea" id="RHEA:23660"/>
        <dbReference type="ChEBI" id="CHEBI:15377"/>
        <dbReference type="ChEBI" id="CHEBI:58928"/>
        <dbReference type="ChEBI" id="CHEBI:77893"/>
        <dbReference type="EC" id="3.5.2.7"/>
    </reaction>
</comment>
<comment type="cofactor">
    <cofactor evidence="1">
        <name>Zn(2+)</name>
        <dbReference type="ChEBI" id="CHEBI:29105"/>
    </cofactor>
    <cofactor evidence="1">
        <name>Fe(3+)</name>
        <dbReference type="ChEBI" id="CHEBI:29034"/>
    </cofactor>
    <text evidence="1">Binds 1 zinc or iron ion per subunit.</text>
</comment>
<comment type="pathway">
    <text evidence="1">Amino-acid degradation; L-histidine degradation into L-glutamate; N-formimidoyl-L-glutamate from L-histidine: step 3/3.</text>
</comment>
<comment type="subcellular location">
    <subcellularLocation>
        <location evidence="1">Cytoplasm</location>
    </subcellularLocation>
</comment>
<comment type="similarity">
    <text evidence="1">Belongs to the metallo-dependent hydrolases superfamily. HutI family.</text>
</comment>
<protein>
    <recommendedName>
        <fullName evidence="1">Imidazolonepropionase</fullName>
        <ecNumber evidence="1">3.5.2.7</ecNumber>
    </recommendedName>
    <alternativeName>
        <fullName evidence="1">Imidazolone-5-propionate hydrolase</fullName>
    </alternativeName>
</protein>
<dbReference type="EC" id="3.5.2.7" evidence="1"/>
<dbReference type="EMBL" id="CP000764">
    <property type="protein sequence ID" value="ABS22556.1"/>
    <property type="molecule type" value="Genomic_DNA"/>
</dbReference>
<dbReference type="RefSeq" id="WP_012094752.1">
    <property type="nucleotide sequence ID" value="NC_009674.1"/>
</dbReference>
<dbReference type="SMR" id="A7GQZ8"/>
<dbReference type="STRING" id="315749.Bcer98_2310"/>
<dbReference type="GeneID" id="33897581"/>
<dbReference type="KEGG" id="bcy:Bcer98_2310"/>
<dbReference type="eggNOG" id="COG1228">
    <property type="taxonomic scope" value="Bacteria"/>
</dbReference>
<dbReference type="HOGENOM" id="CLU_041647_0_1_9"/>
<dbReference type="OrthoDB" id="9776455at2"/>
<dbReference type="UniPathway" id="UPA00379">
    <property type="reaction ID" value="UER00551"/>
</dbReference>
<dbReference type="Proteomes" id="UP000002300">
    <property type="component" value="Chromosome"/>
</dbReference>
<dbReference type="GO" id="GO:0005737">
    <property type="term" value="C:cytoplasm"/>
    <property type="evidence" value="ECO:0007669"/>
    <property type="project" value="UniProtKB-SubCell"/>
</dbReference>
<dbReference type="GO" id="GO:0050480">
    <property type="term" value="F:imidazolonepropionase activity"/>
    <property type="evidence" value="ECO:0007669"/>
    <property type="project" value="UniProtKB-UniRule"/>
</dbReference>
<dbReference type="GO" id="GO:0005506">
    <property type="term" value="F:iron ion binding"/>
    <property type="evidence" value="ECO:0007669"/>
    <property type="project" value="UniProtKB-UniRule"/>
</dbReference>
<dbReference type="GO" id="GO:0008270">
    <property type="term" value="F:zinc ion binding"/>
    <property type="evidence" value="ECO:0007669"/>
    <property type="project" value="UniProtKB-UniRule"/>
</dbReference>
<dbReference type="GO" id="GO:0019556">
    <property type="term" value="P:L-histidine catabolic process to glutamate and formamide"/>
    <property type="evidence" value="ECO:0007669"/>
    <property type="project" value="UniProtKB-UniPathway"/>
</dbReference>
<dbReference type="GO" id="GO:0019557">
    <property type="term" value="P:L-histidine catabolic process to glutamate and formate"/>
    <property type="evidence" value="ECO:0007669"/>
    <property type="project" value="UniProtKB-UniPathway"/>
</dbReference>
<dbReference type="CDD" id="cd01296">
    <property type="entry name" value="Imidazolone-5PH"/>
    <property type="match status" value="1"/>
</dbReference>
<dbReference type="FunFam" id="3.20.20.140:FF:000007">
    <property type="entry name" value="Imidazolonepropionase"/>
    <property type="match status" value="1"/>
</dbReference>
<dbReference type="Gene3D" id="3.20.20.140">
    <property type="entry name" value="Metal-dependent hydrolases"/>
    <property type="match status" value="1"/>
</dbReference>
<dbReference type="Gene3D" id="2.30.40.10">
    <property type="entry name" value="Urease, subunit C, domain 1"/>
    <property type="match status" value="1"/>
</dbReference>
<dbReference type="HAMAP" id="MF_00372">
    <property type="entry name" value="HutI"/>
    <property type="match status" value="1"/>
</dbReference>
<dbReference type="InterPro" id="IPR006680">
    <property type="entry name" value="Amidohydro-rel"/>
</dbReference>
<dbReference type="InterPro" id="IPR005920">
    <property type="entry name" value="HutI"/>
</dbReference>
<dbReference type="InterPro" id="IPR011059">
    <property type="entry name" value="Metal-dep_hydrolase_composite"/>
</dbReference>
<dbReference type="InterPro" id="IPR032466">
    <property type="entry name" value="Metal_Hydrolase"/>
</dbReference>
<dbReference type="NCBIfam" id="TIGR01224">
    <property type="entry name" value="hutI"/>
    <property type="match status" value="1"/>
</dbReference>
<dbReference type="PANTHER" id="PTHR42752">
    <property type="entry name" value="IMIDAZOLONEPROPIONASE"/>
    <property type="match status" value="1"/>
</dbReference>
<dbReference type="PANTHER" id="PTHR42752:SF1">
    <property type="entry name" value="IMIDAZOLONEPROPIONASE-RELATED"/>
    <property type="match status" value="1"/>
</dbReference>
<dbReference type="Pfam" id="PF01979">
    <property type="entry name" value="Amidohydro_1"/>
    <property type="match status" value="1"/>
</dbReference>
<dbReference type="SUPFAM" id="SSF51338">
    <property type="entry name" value="Composite domain of metallo-dependent hydrolases"/>
    <property type="match status" value="1"/>
</dbReference>
<dbReference type="SUPFAM" id="SSF51556">
    <property type="entry name" value="Metallo-dependent hydrolases"/>
    <property type="match status" value="1"/>
</dbReference>